<sequence>MNILIFGPNGSGKGTQGELIQKAFGITHIESGVIFREHISKGTELGKQAKSYIDKGELVPDDITIPMILETLQIKGKSGWLLDGFPRNITQAQKLHEAMLKKGVKLDYVIEITLPREVAKSRIIGRRICKTNNNHPNNVSIDSIKPDGNNCRVCHGELIVRTDDQDEEAINKRHDIYYNTKTGTLSAAHYFKNLSDQYETHYILVNGQNTIEEIRKTLLEDLGISSEVS</sequence>
<organism>
    <name type="scientific">Lawsonia intracellularis (strain PHE/MN1-00)</name>
    <dbReference type="NCBI Taxonomy" id="363253"/>
    <lineage>
        <taxon>Bacteria</taxon>
        <taxon>Pseudomonadati</taxon>
        <taxon>Thermodesulfobacteriota</taxon>
        <taxon>Desulfovibrionia</taxon>
        <taxon>Desulfovibrionales</taxon>
        <taxon>Desulfovibrionaceae</taxon>
        <taxon>Lawsonia</taxon>
    </lineage>
</organism>
<dbReference type="EC" id="2.7.4.3" evidence="1"/>
<dbReference type="EMBL" id="AM180252">
    <property type="protein sequence ID" value="CAJ54373.1"/>
    <property type="molecule type" value="Genomic_DNA"/>
</dbReference>
<dbReference type="RefSeq" id="WP_011526402.1">
    <property type="nucleotide sequence ID" value="NC_008011.1"/>
</dbReference>
<dbReference type="SMR" id="Q1MRK3"/>
<dbReference type="STRING" id="363253.LI0317"/>
<dbReference type="KEGG" id="lip:LI0317"/>
<dbReference type="eggNOG" id="COG0563">
    <property type="taxonomic scope" value="Bacteria"/>
</dbReference>
<dbReference type="HOGENOM" id="CLU_032354_1_2_7"/>
<dbReference type="OrthoDB" id="9805030at2"/>
<dbReference type="UniPathway" id="UPA00588">
    <property type="reaction ID" value="UER00649"/>
</dbReference>
<dbReference type="Proteomes" id="UP000002430">
    <property type="component" value="Chromosome"/>
</dbReference>
<dbReference type="GO" id="GO:0005737">
    <property type="term" value="C:cytoplasm"/>
    <property type="evidence" value="ECO:0007669"/>
    <property type="project" value="UniProtKB-SubCell"/>
</dbReference>
<dbReference type="GO" id="GO:0004017">
    <property type="term" value="F:adenylate kinase activity"/>
    <property type="evidence" value="ECO:0007669"/>
    <property type="project" value="UniProtKB-UniRule"/>
</dbReference>
<dbReference type="GO" id="GO:0005524">
    <property type="term" value="F:ATP binding"/>
    <property type="evidence" value="ECO:0007669"/>
    <property type="project" value="UniProtKB-UniRule"/>
</dbReference>
<dbReference type="GO" id="GO:0044209">
    <property type="term" value="P:AMP salvage"/>
    <property type="evidence" value="ECO:0007669"/>
    <property type="project" value="UniProtKB-UniRule"/>
</dbReference>
<dbReference type="CDD" id="cd01428">
    <property type="entry name" value="ADK"/>
    <property type="match status" value="1"/>
</dbReference>
<dbReference type="Gene3D" id="3.40.50.300">
    <property type="entry name" value="P-loop containing nucleotide triphosphate hydrolases"/>
    <property type="match status" value="1"/>
</dbReference>
<dbReference type="HAMAP" id="MF_00235">
    <property type="entry name" value="Adenylate_kinase_Adk"/>
    <property type="match status" value="1"/>
</dbReference>
<dbReference type="InterPro" id="IPR006259">
    <property type="entry name" value="Adenyl_kin_sub"/>
</dbReference>
<dbReference type="InterPro" id="IPR000850">
    <property type="entry name" value="Adenylat/UMP-CMP_kin"/>
</dbReference>
<dbReference type="InterPro" id="IPR033690">
    <property type="entry name" value="Adenylat_kinase_CS"/>
</dbReference>
<dbReference type="InterPro" id="IPR027417">
    <property type="entry name" value="P-loop_NTPase"/>
</dbReference>
<dbReference type="NCBIfam" id="TIGR01351">
    <property type="entry name" value="adk"/>
    <property type="match status" value="1"/>
</dbReference>
<dbReference type="NCBIfam" id="NF011102">
    <property type="entry name" value="PRK14529.1"/>
    <property type="match status" value="1"/>
</dbReference>
<dbReference type="PANTHER" id="PTHR23359">
    <property type="entry name" value="NUCLEOTIDE KINASE"/>
    <property type="match status" value="1"/>
</dbReference>
<dbReference type="Pfam" id="PF00406">
    <property type="entry name" value="ADK"/>
    <property type="match status" value="1"/>
</dbReference>
<dbReference type="PRINTS" id="PR00094">
    <property type="entry name" value="ADENYLTKNASE"/>
</dbReference>
<dbReference type="SUPFAM" id="SSF52540">
    <property type="entry name" value="P-loop containing nucleoside triphosphate hydrolases"/>
    <property type="match status" value="1"/>
</dbReference>
<dbReference type="PROSITE" id="PS00113">
    <property type="entry name" value="ADENYLATE_KINASE"/>
    <property type="match status" value="1"/>
</dbReference>
<comment type="function">
    <text evidence="1">Catalyzes the reversible transfer of the terminal phosphate group between ATP and AMP. Plays an important role in cellular energy homeostasis and in adenine nucleotide metabolism.</text>
</comment>
<comment type="catalytic activity">
    <reaction evidence="1">
        <text>AMP + ATP = 2 ADP</text>
        <dbReference type="Rhea" id="RHEA:12973"/>
        <dbReference type="ChEBI" id="CHEBI:30616"/>
        <dbReference type="ChEBI" id="CHEBI:456215"/>
        <dbReference type="ChEBI" id="CHEBI:456216"/>
        <dbReference type="EC" id="2.7.4.3"/>
    </reaction>
</comment>
<comment type="pathway">
    <text evidence="1">Purine metabolism; AMP biosynthesis via salvage pathway; AMP from ADP: step 1/1.</text>
</comment>
<comment type="subunit">
    <text evidence="1">Monomer.</text>
</comment>
<comment type="subcellular location">
    <subcellularLocation>
        <location evidence="1">Cytoplasm</location>
    </subcellularLocation>
</comment>
<comment type="domain">
    <text evidence="1">Consists of three domains, a large central CORE domain and two small peripheral domains, NMPbind and LID, which undergo movements during catalysis. The LID domain closes over the site of phosphoryl transfer upon ATP binding. Assembling and dissambling the active center during each catalytic cycle provides an effective means to prevent ATP hydrolysis.</text>
</comment>
<comment type="similarity">
    <text evidence="1">Belongs to the adenylate kinase family.</text>
</comment>
<protein>
    <recommendedName>
        <fullName evidence="1">Adenylate kinase</fullName>
        <shortName evidence="1">AK</shortName>
        <ecNumber evidence="1">2.7.4.3</ecNumber>
    </recommendedName>
    <alternativeName>
        <fullName evidence="1">ATP-AMP transphosphorylase</fullName>
    </alternativeName>
    <alternativeName>
        <fullName evidence="1">ATP:AMP phosphotransferase</fullName>
    </alternativeName>
    <alternativeName>
        <fullName evidence="1">Adenylate monophosphate kinase</fullName>
    </alternativeName>
</protein>
<evidence type="ECO:0000255" key="1">
    <source>
        <dbReference type="HAMAP-Rule" id="MF_00235"/>
    </source>
</evidence>
<feature type="chain" id="PRO_1000021738" description="Adenylate kinase">
    <location>
        <begin position="1"/>
        <end position="229"/>
    </location>
</feature>
<feature type="region of interest" description="NMP" evidence="1">
    <location>
        <begin position="30"/>
        <end position="59"/>
    </location>
</feature>
<feature type="region of interest" description="LID" evidence="1">
    <location>
        <begin position="125"/>
        <end position="164"/>
    </location>
</feature>
<feature type="binding site" evidence="1">
    <location>
        <begin position="10"/>
        <end position="15"/>
    </location>
    <ligand>
        <name>ATP</name>
        <dbReference type="ChEBI" id="CHEBI:30616"/>
    </ligand>
</feature>
<feature type="binding site" evidence="1">
    <location>
        <position position="31"/>
    </location>
    <ligand>
        <name>AMP</name>
        <dbReference type="ChEBI" id="CHEBI:456215"/>
    </ligand>
</feature>
<feature type="binding site" evidence="1">
    <location>
        <position position="36"/>
    </location>
    <ligand>
        <name>AMP</name>
        <dbReference type="ChEBI" id="CHEBI:456215"/>
    </ligand>
</feature>
<feature type="binding site" evidence="1">
    <location>
        <begin position="57"/>
        <end position="59"/>
    </location>
    <ligand>
        <name>AMP</name>
        <dbReference type="ChEBI" id="CHEBI:456215"/>
    </ligand>
</feature>
<feature type="binding site" evidence="1">
    <location>
        <begin position="84"/>
        <end position="87"/>
    </location>
    <ligand>
        <name>AMP</name>
        <dbReference type="ChEBI" id="CHEBI:456215"/>
    </ligand>
</feature>
<feature type="binding site" evidence="1">
    <location>
        <position position="91"/>
    </location>
    <ligand>
        <name>AMP</name>
        <dbReference type="ChEBI" id="CHEBI:456215"/>
    </ligand>
</feature>
<feature type="binding site" evidence="1">
    <location>
        <position position="126"/>
    </location>
    <ligand>
        <name>ATP</name>
        <dbReference type="ChEBI" id="CHEBI:30616"/>
    </ligand>
</feature>
<feature type="binding site" evidence="1">
    <location>
        <position position="161"/>
    </location>
    <ligand>
        <name>AMP</name>
        <dbReference type="ChEBI" id="CHEBI:456215"/>
    </ligand>
</feature>
<feature type="binding site" evidence="1">
    <location>
        <position position="173"/>
    </location>
    <ligand>
        <name>AMP</name>
        <dbReference type="ChEBI" id="CHEBI:456215"/>
    </ligand>
</feature>
<feature type="binding site" evidence="1">
    <location>
        <position position="209"/>
    </location>
    <ligand>
        <name>ATP</name>
        <dbReference type="ChEBI" id="CHEBI:30616"/>
    </ligand>
</feature>
<accession>Q1MRK3</accession>
<gene>
    <name evidence="1" type="primary">adk</name>
    <name type="ordered locus">LI0317</name>
</gene>
<name>KAD_LAWIP</name>
<reference key="1">
    <citation type="submission" date="2005-11" db="EMBL/GenBank/DDBJ databases">
        <title>The complete genome sequence of Lawsonia intracellularis: the causative agent of proliferative enteropathy.</title>
        <authorList>
            <person name="Kaur K."/>
            <person name="Zhang Q."/>
            <person name="Beckler D."/>
            <person name="Munir S."/>
            <person name="Li L."/>
            <person name="Kinsley K."/>
            <person name="Herron L."/>
            <person name="Peterson A."/>
            <person name="May B."/>
            <person name="Singh S."/>
            <person name="Gebhart C."/>
            <person name="Kapur V."/>
        </authorList>
    </citation>
    <scope>NUCLEOTIDE SEQUENCE [LARGE SCALE GENOMIC DNA]</scope>
    <source>
        <strain>PHE/MN1-00</strain>
    </source>
</reference>
<proteinExistence type="inferred from homology"/>
<keyword id="KW-0067">ATP-binding</keyword>
<keyword id="KW-0963">Cytoplasm</keyword>
<keyword id="KW-0418">Kinase</keyword>
<keyword id="KW-0545">Nucleotide biosynthesis</keyword>
<keyword id="KW-0547">Nucleotide-binding</keyword>
<keyword id="KW-1185">Reference proteome</keyword>
<keyword id="KW-0808">Transferase</keyword>